<gene>
    <name type="primary">ABF1</name>
    <name type="synonym">BAF1</name>
    <name type="synonym">OBF1</name>
    <name type="synonym">REB2</name>
    <name type="synonym">SBF1</name>
    <name type="ordered locus">YKL112W</name>
    <name type="ORF">YKL505</name>
</gene>
<dbReference type="EMBL" id="X16385">
    <property type="protein sequence ID" value="CAA34421.1"/>
    <property type="molecule type" value="Genomic_DNA"/>
</dbReference>
<dbReference type="EMBL" id="X51654">
    <property type="protein sequence ID" value="CAA35966.1"/>
    <property type="molecule type" value="Genomic_DNA"/>
</dbReference>
<dbReference type="EMBL" id="M29067">
    <property type="protein sequence ID" value="AAA66311.1"/>
    <property type="molecule type" value="Genomic_DNA"/>
</dbReference>
<dbReference type="EMBL" id="M63578">
    <property type="protein sequence ID" value="AAA34823.1"/>
    <property type="molecule type" value="Genomic_DNA"/>
</dbReference>
<dbReference type="EMBL" id="S93804">
    <property type="protein sequence ID" value="AAB22002.1"/>
    <property type="molecule type" value="Genomic_DNA"/>
</dbReference>
<dbReference type="EMBL" id="Z28111">
    <property type="protein sequence ID" value="CAA81951.1"/>
    <property type="molecule type" value="Genomic_DNA"/>
</dbReference>
<dbReference type="EMBL" id="X77511">
    <property type="protein sequence ID" value="CAA54647.1"/>
    <property type="molecule type" value="Genomic_DNA"/>
</dbReference>
<dbReference type="EMBL" id="BK006944">
    <property type="protein sequence ID" value="DAA09046.1"/>
    <property type="molecule type" value="Genomic_DNA"/>
</dbReference>
<dbReference type="PIR" id="S29870">
    <property type="entry name" value="S29870"/>
</dbReference>
<dbReference type="RefSeq" id="NP_012810.1">
    <property type="nucleotide sequence ID" value="NM_001179678.1"/>
</dbReference>
<dbReference type="BioGRID" id="34022">
    <property type="interactions" value="412"/>
</dbReference>
<dbReference type="ComplexPortal" id="CPX-1709">
    <property type="entry name" value="Nucleotide excision repair factor 4 complex"/>
</dbReference>
<dbReference type="DIP" id="DIP-2199N"/>
<dbReference type="FunCoup" id="P14164">
    <property type="interactions" value="1975"/>
</dbReference>
<dbReference type="IntAct" id="P14164">
    <property type="interactions" value="28"/>
</dbReference>
<dbReference type="MINT" id="P14164"/>
<dbReference type="STRING" id="4932.YKL112W"/>
<dbReference type="iPTMnet" id="P14164"/>
<dbReference type="PaxDb" id="4932-YKL112W"/>
<dbReference type="PeptideAtlas" id="P14164"/>
<dbReference type="EnsemblFungi" id="YKL112W_mRNA">
    <property type="protein sequence ID" value="YKL112W"/>
    <property type="gene ID" value="YKL112W"/>
</dbReference>
<dbReference type="GeneID" id="853748"/>
<dbReference type="KEGG" id="sce:YKL112W"/>
<dbReference type="AGR" id="SGD:S000001595"/>
<dbReference type="SGD" id="S000001595">
    <property type="gene designation" value="ABF1"/>
</dbReference>
<dbReference type="VEuPathDB" id="FungiDB:YKL112W"/>
<dbReference type="eggNOG" id="ENOG502QSTW">
    <property type="taxonomic scope" value="Eukaryota"/>
</dbReference>
<dbReference type="HOGENOM" id="CLU_031229_0_0_1"/>
<dbReference type="InParanoid" id="P14164"/>
<dbReference type="OMA" id="HRNKHFT"/>
<dbReference type="OrthoDB" id="4065241at2759"/>
<dbReference type="BioCyc" id="YEAST:G3O-31897-MONOMER"/>
<dbReference type="BioGRID-ORCS" id="853748">
    <property type="hits" value="0 hits in 13 CRISPR screens"/>
</dbReference>
<dbReference type="PRO" id="PR:P14164"/>
<dbReference type="Proteomes" id="UP000002311">
    <property type="component" value="Chromosome XI"/>
</dbReference>
<dbReference type="RNAct" id="P14164">
    <property type="molecule type" value="protein"/>
</dbReference>
<dbReference type="GO" id="GO:0000113">
    <property type="term" value="C:nucleotide-excision repair factor 4 complex"/>
    <property type="evidence" value="ECO:0000314"/>
    <property type="project" value="SGD"/>
</dbReference>
<dbReference type="GO" id="GO:0005634">
    <property type="term" value="C:nucleus"/>
    <property type="evidence" value="ECO:0000314"/>
    <property type="project" value="SGD"/>
</dbReference>
<dbReference type="GO" id="GO:0003688">
    <property type="term" value="F:DNA replication origin binding"/>
    <property type="evidence" value="ECO:0000314"/>
    <property type="project" value="SGD"/>
</dbReference>
<dbReference type="GO" id="GO:0001228">
    <property type="term" value="F:DNA-binding transcription activator activity, RNA polymerase II-specific"/>
    <property type="evidence" value="ECO:0000314"/>
    <property type="project" value="SGD"/>
</dbReference>
<dbReference type="GO" id="GO:0000978">
    <property type="term" value="F:RNA polymerase II cis-regulatory region sequence-specific DNA binding"/>
    <property type="evidence" value="ECO:0000314"/>
    <property type="project" value="SGD"/>
</dbReference>
<dbReference type="GO" id="GO:0043565">
    <property type="term" value="F:sequence-specific DNA binding"/>
    <property type="evidence" value="ECO:0000314"/>
    <property type="project" value="SGD"/>
</dbReference>
<dbReference type="GO" id="GO:0044374">
    <property type="term" value="F:sequence-specific DNA binding, bending"/>
    <property type="evidence" value="ECO:0000314"/>
    <property type="project" value="SGD"/>
</dbReference>
<dbReference type="GO" id="GO:0006338">
    <property type="term" value="P:chromatin remodeling"/>
    <property type="evidence" value="ECO:0000314"/>
    <property type="project" value="SGD"/>
</dbReference>
<dbReference type="GO" id="GO:0006261">
    <property type="term" value="P:DNA-templated DNA replication"/>
    <property type="evidence" value="ECO:0000314"/>
    <property type="project" value="SGD"/>
</dbReference>
<dbReference type="GO" id="GO:0070911">
    <property type="term" value="P:global genome nucleotide-excision repair"/>
    <property type="evidence" value="ECO:0000314"/>
    <property type="project" value="SGD"/>
</dbReference>
<dbReference type="GO" id="GO:0000122">
    <property type="term" value="P:negative regulation of transcription by RNA polymerase II"/>
    <property type="evidence" value="ECO:0000315"/>
    <property type="project" value="SGD"/>
</dbReference>
<dbReference type="GO" id="GO:0045944">
    <property type="term" value="P:positive regulation of transcription by RNA polymerase II"/>
    <property type="evidence" value="ECO:0000315"/>
    <property type="project" value="SGD"/>
</dbReference>
<dbReference type="GO" id="GO:0030466">
    <property type="term" value="P:silent mating-type cassette heterochromatin formation"/>
    <property type="evidence" value="ECO:0000315"/>
    <property type="project" value="SGD"/>
</dbReference>
<dbReference type="InterPro" id="IPR006774">
    <property type="entry name" value="BAF1_ABF1"/>
</dbReference>
<dbReference type="Pfam" id="PF04684">
    <property type="entry name" value="BAF1_ABF1"/>
    <property type="match status" value="1"/>
</dbReference>
<sequence>MDKLVVNYYEYKHPIINKDLAIGAHGGKKFPTLGAWYDVINEYEFQTRCPIILKNSHRNKHFTFACHLKNCPFKVLLSYAGNAASSETSSPSANNNTNPPGTPDHIHHHSNNMNNEDNDNNNGSNNKVSNDSKLDFVTDDLEYHLANTHPDDTNDKVESRSNEVNGNNDDDADANNIFKQQGVTIKNDTEDDSINKASIDRGLDDESGPTHGNDSGNHRHNEEDDVHTQMTKNYSDVVNDEDINVAIANAVANVDSQSNNKHDGKDDDATNNNDGQDNNTNNDHNNNSNINNNNVGSHGISSHSPSSIRDTSMNLDVFNSATDDIPGPFVVTKIEPYHSHPLEDNLSLGKFILTKIPKILQNDLKFDQILESSYNNSNHTVSKFKVSHYVEESGLLDILMQRYGLTAEDFEKRLLSQIARRITTYKARFVLKKKKMGEYNDLQPSSSSNNNNNNDGELSGTNLRSNSIDYAKHQEISSAGTSSNTTKNVNNNKNDSNDDNNGNNNNDASNLMESVLDKTSSHRYQPKKMPSVNKWSKPDQITHSDVSMVGLDESNDGGNENVHPTLAEVDAQEARETAQLAIDKINSYKRSIDDKNGDGHNNSSRNVVDENLINDMDSEDAHKSKRQHLSDITLEERNEDDKLPHEVAEQLRLLSSHLKEVENLHQNNDDDVDDVMVDVDVESQYNKNTTHHNNHHSQPHHDEEDVAGLIGKADDEEDLSDENIQPELRGQ</sequence>
<accession>P14164</accession>
<accession>D6VXH6</accession>
<reference key="1">
    <citation type="journal article" date="1989" name="EMBO J.">
        <title>Sequence, expression and mutational analysis of BAF1, a transcriptional activator and ARS1-binding protein of the yeast Saccharomyces cerevisiae.</title>
        <authorList>
            <person name="Halfter H."/>
            <person name="Kavety B."/>
            <person name="Vandekerckhove J."/>
            <person name="Kiefer F."/>
            <person name="Gallwitz D."/>
        </authorList>
    </citation>
    <scope>NUCLEOTIDE SEQUENCE [GENOMIC DNA]</scope>
    <scope>PROTEIN SEQUENCE OF 128-154 AND 535-555</scope>
    <scope>MUTAGENESIS OF HIS-57 AND CYS-71</scope>
</reference>
<reference key="2">
    <citation type="journal article" date="1989" name="Genes Dev.">
        <title>The gene encoding ARS-binding factor I is essential for the viability of yeast.</title>
        <authorList>
            <person name="Rhode P.R."/>
            <person name="Sweder K.S."/>
            <person name="Oegema K.F."/>
            <person name="Campbell J.L."/>
        </authorList>
    </citation>
    <scope>NUCLEOTIDE SEQUENCE [GENOMIC DNA]</scope>
</reference>
<reference key="3">
    <citation type="journal article" date="1989" name="Science">
        <title>Similarity between the transcriptional silencer binding proteins ABF1 and RAP1.</title>
        <authorList>
            <person name="Diffley J.F.X."/>
            <person name="Stillman B."/>
        </authorList>
    </citation>
    <scope>NUCLEOTIDE SEQUENCE [GENOMIC DNA]</scope>
</reference>
<reference key="4">
    <citation type="journal article" date="1991" name="Proc. Natl. Acad. Sci. U.S.A.">
        <title>The multifunctional protein OBF1 is phosphorylated at serine and threonine residues in Saccharomyces cerevisiae.</title>
        <authorList>
            <person name="Francesconi S.C."/>
            <person name="Eisenberg S."/>
        </authorList>
    </citation>
    <scope>NUCLEOTIDE SEQUENCE [GENOMIC DNA]</scope>
    <scope>PHOSPHORYLATION</scope>
</reference>
<reference key="5">
    <citation type="journal article" date="1992" name="Yeast">
        <title>Sequence of a 10.7 kb segment of yeast chromosome XI identifies the APN1 and the BAF1 loci and reveals one tRNA gene and several new open reading frames including homologs to RAD2 and kinases.</title>
        <authorList>
            <person name="Jacquier A."/>
            <person name="Legrain P."/>
            <person name="Dujon B."/>
        </authorList>
    </citation>
    <scope>NUCLEOTIDE SEQUENCE [GENOMIC DNA]</scope>
</reference>
<reference key="6">
    <citation type="journal article" date="1994" name="Nature">
        <title>Complete DNA sequence of yeast chromosome XI.</title>
        <authorList>
            <person name="Dujon B."/>
            <person name="Alexandraki D."/>
            <person name="Andre B."/>
            <person name="Ansorge W."/>
            <person name="Baladron V."/>
            <person name="Ballesta J.P.G."/>
            <person name="Banrevi A."/>
            <person name="Bolle P.-A."/>
            <person name="Bolotin-Fukuhara M."/>
            <person name="Bossier P."/>
            <person name="Bou G."/>
            <person name="Boyer J."/>
            <person name="Buitrago M.J."/>
            <person name="Cheret G."/>
            <person name="Colleaux L."/>
            <person name="Daignan-Fornier B."/>
            <person name="del Rey F."/>
            <person name="Dion C."/>
            <person name="Domdey H."/>
            <person name="Duesterhoeft A."/>
            <person name="Duesterhus S."/>
            <person name="Entian K.-D."/>
            <person name="Erfle H."/>
            <person name="Esteban P.F."/>
            <person name="Feldmann H."/>
            <person name="Fernandes L."/>
            <person name="Fobo G.M."/>
            <person name="Fritz C."/>
            <person name="Fukuhara H."/>
            <person name="Gabel C."/>
            <person name="Gaillon L."/>
            <person name="Garcia-Cantalejo J.M."/>
            <person name="Garcia-Ramirez J.J."/>
            <person name="Gent M.E."/>
            <person name="Ghazvini M."/>
            <person name="Goffeau A."/>
            <person name="Gonzalez A."/>
            <person name="Grothues D."/>
            <person name="Guerreiro P."/>
            <person name="Hegemann J.H."/>
            <person name="Hewitt N."/>
            <person name="Hilger F."/>
            <person name="Hollenberg C.P."/>
            <person name="Horaitis O."/>
            <person name="Indge K.J."/>
            <person name="Jacquier A."/>
            <person name="James C.M."/>
            <person name="Jauniaux J.-C."/>
            <person name="Jimenez A."/>
            <person name="Keuchel H."/>
            <person name="Kirchrath L."/>
            <person name="Kleine K."/>
            <person name="Koetter P."/>
            <person name="Legrain P."/>
            <person name="Liebl S."/>
            <person name="Louis E.J."/>
            <person name="Maia e Silva A."/>
            <person name="Marck C."/>
            <person name="Monnier A.-L."/>
            <person name="Moestl D."/>
            <person name="Mueller S."/>
            <person name="Obermaier B."/>
            <person name="Oliver S.G."/>
            <person name="Pallier C."/>
            <person name="Pascolo S."/>
            <person name="Pfeiffer F."/>
            <person name="Philippsen P."/>
            <person name="Planta R.J."/>
            <person name="Pohl F.M."/>
            <person name="Pohl T.M."/>
            <person name="Poehlmann R."/>
            <person name="Portetelle D."/>
            <person name="Purnelle B."/>
            <person name="Puzos V."/>
            <person name="Ramezani Rad M."/>
            <person name="Rasmussen S.W."/>
            <person name="Remacha M.A."/>
            <person name="Revuelta J.L."/>
            <person name="Richard G.-F."/>
            <person name="Rieger M."/>
            <person name="Rodrigues-Pousada C."/>
            <person name="Rose M."/>
            <person name="Rupp T."/>
            <person name="Santos M.A."/>
            <person name="Schwager C."/>
            <person name="Sensen C."/>
            <person name="Skala J."/>
            <person name="Soares H."/>
            <person name="Sor F."/>
            <person name="Stegemann J."/>
            <person name="Tettelin H."/>
            <person name="Thierry A."/>
            <person name="Tzermia M."/>
            <person name="Urrestarazu L.A."/>
            <person name="van Dyck L."/>
            <person name="van Vliet-Reedijk J.C."/>
            <person name="Valens M."/>
            <person name="Vandenbol M."/>
            <person name="Vilela C."/>
            <person name="Vissers S."/>
            <person name="von Wettstein D."/>
            <person name="Voss H."/>
            <person name="Wiemann S."/>
            <person name="Xu G."/>
            <person name="Zimmermann J."/>
            <person name="Haasemann M."/>
            <person name="Becker I."/>
            <person name="Mewes H.-W."/>
        </authorList>
    </citation>
    <scope>NUCLEOTIDE SEQUENCE [LARGE SCALE GENOMIC DNA]</scope>
    <source>
        <strain>ATCC 204508 / S288c</strain>
    </source>
</reference>
<reference key="7">
    <citation type="journal article" date="2014" name="G3 (Bethesda)">
        <title>The reference genome sequence of Saccharomyces cerevisiae: Then and now.</title>
        <authorList>
            <person name="Engel S.R."/>
            <person name="Dietrich F.S."/>
            <person name="Fisk D.G."/>
            <person name="Binkley G."/>
            <person name="Balakrishnan R."/>
            <person name="Costanzo M.C."/>
            <person name="Dwight S.S."/>
            <person name="Hitz B.C."/>
            <person name="Karra K."/>
            <person name="Nash R.S."/>
            <person name="Weng S."/>
            <person name="Wong E.D."/>
            <person name="Lloyd P."/>
            <person name="Skrzypek M.S."/>
            <person name="Miyasato S.R."/>
            <person name="Simison M."/>
            <person name="Cherry J.M."/>
        </authorList>
    </citation>
    <scope>GENOME REANNOTATION</scope>
    <source>
        <strain>ATCC 204508 / S288c</strain>
    </source>
</reference>
<reference key="8">
    <citation type="journal article" date="1994" name="Mol. Cell. Biol.">
        <title>Two Saccharomyces cerevisiae genes which control sensitivity to G1 arrest induced by Kluyveromyces lactis toxin.</title>
        <authorList>
            <person name="Butler A.R."/>
            <person name="White J.H."/>
            <person name="Folawiyo Y."/>
            <person name="Edlin A."/>
            <person name="Gardiner D."/>
            <person name="Stark M.J.R."/>
        </authorList>
    </citation>
    <scope>NUCLEOTIDE SEQUENCE [GENOMIC DNA] OF 585-731</scope>
</reference>
<reference key="9">
    <citation type="journal article" date="1995" name="J. Biol. Chem.">
        <title>ABF1 Ser-720 is a predominant phosphorylation site for casein kinase II of Saccharomyces cerevisiae.</title>
        <authorList>
            <person name="Upton T."/>
            <person name="Wiltshire S."/>
            <person name="Francesconi S."/>
            <person name="Eisenberg S."/>
        </authorList>
    </citation>
    <scope>PHOSPHORYLATION AT SER-720</scope>
    <scope>MUTAGENESIS OF SER-720</scope>
</reference>
<reference key="10">
    <citation type="journal article" date="1998" name="J. Biol. Chem.">
        <title>Saccharomyces cerevisiae Cdc6 stimulates Abf1 DNA binding activity.</title>
        <authorList>
            <person name="Feng L."/>
            <person name="Wang B."/>
            <person name="Jong A."/>
        </authorList>
    </citation>
    <scope>DNA-BINDING</scope>
</reference>
<reference key="11">
    <citation type="journal article" date="1999" name="Genes Dev.">
        <title>Yeast autonomously replicating sequence binding factor is involved in nucleotide excision repair.</title>
        <authorList>
            <person name="Reed S.H."/>
            <person name="Akiyama M."/>
            <person name="Stillman B."/>
            <person name="Friedberg E.C."/>
        </authorList>
    </citation>
    <scope>IDENTIFICATION IN THE GGR COMPLEX</scope>
    <scope>FUNCTION</scope>
</reference>
<reference key="12">
    <citation type="journal article" date="2000" name="Nucleic Acids Res.">
        <title>Different roles for abf1p and a T-rich promoter element in nucleosome organization of the yeast RPS28A gene.</title>
        <authorList>
            <person name="Lascaris R.F."/>
            <person name="Groot E."/>
            <person name="Hoen P.B."/>
            <person name="Mager W.H."/>
            <person name="Planta R.J."/>
        </authorList>
    </citation>
    <scope>FUNCTION</scope>
</reference>
<reference key="13">
    <citation type="journal article" date="2001" name="Nucleic Acids Res.">
        <title>RNA polymerase II and III transcription factors can stimulate DNA replication by modifying origin chromatin structures.</title>
        <authorList>
            <person name="Bodmer-Glavas M."/>
            <person name="Edler K."/>
            <person name="Barberis A."/>
        </authorList>
    </citation>
    <scope>FUNCTION</scope>
</reference>
<reference key="14">
    <citation type="journal article" date="2002" name="J. Biol. Chem.">
        <title>General regulatory factors (GRFs) as genome partitioners.</title>
        <authorList>
            <person name="Fourel G."/>
            <person name="Miyake T."/>
            <person name="Defossez P.-A."/>
            <person name="Li R."/>
            <person name="Gilson E."/>
        </authorList>
    </citation>
    <scope>FUNCTION</scope>
</reference>
<reference key="15">
    <citation type="journal article" date="2002" name="Mol. Cell. Biol.">
        <title>Identification of a multifunctional domain in autonomously replicating sequence-binding factor 1 required for transcriptional activation, DNA replication, and gene silencing.</title>
        <authorList>
            <person name="Miyake T."/>
            <person name="Loch C.M."/>
            <person name="Li R."/>
        </authorList>
    </citation>
    <scope>FUNCTION</scope>
    <scope>DOMAIN</scope>
</reference>
<reference key="16">
    <citation type="journal article" date="2003" name="Nature">
        <title>Global analysis of protein expression in yeast.</title>
        <authorList>
            <person name="Ghaemmaghami S."/>
            <person name="Huh W.-K."/>
            <person name="Bower K."/>
            <person name="Howson R.W."/>
            <person name="Belle A."/>
            <person name="Dephoure N."/>
            <person name="O'Shea E.K."/>
            <person name="Weissman J.S."/>
        </authorList>
    </citation>
    <scope>LEVEL OF PROTEIN EXPRESSION [LARGE SCALE ANALYSIS]</scope>
</reference>
<reference key="17">
    <citation type="journal article" date="2004" name="DNA Repair">
        <title>The yeast Rad7/Rad16/Abf1 complex generates superhelical torsion in DNA that is required for nucleotide excision repair.</title>
        <authorList>
            <person name="Yu S."/>
            <person name="Owen-Hughes T."/>
            <person name="Friedberg E.C."/>
            <person name="Waters R."/>
            <person name="Reed S.H."/>
        </authorList>
    </citation>
    <scope>FUNCTION OF THE GGR COMPLEX</scope>
</reference>
<reference key="18">
    <citation type="journal article" date="2004" name="Mol. Cell. Biol.">
        <title>Comparison of ABF1 and RAP1 in chromatin opening and transactivator potentiation in the budding yeast Saccharomyces cerevisiae.</title>
        <authorList>
            <person name="Yarragudi A."/>
            <person name="Miyake T."/>
            <person name="Li R."/>
            <person name="Morse R.H."/>
        </authorList>
    </citation>
    <scope>FUNCTION</scope>
</reference>
<reference key="19">
    <citation type="journal article" date="2004" name="Traffic">
        <title>Functional and physical interactions between autonomously replicating sequence-binding factor 1 and the nuclear transport machinery.</title>
        <authorList>
            <person name="Loch C.M."/>
            <person name="Mosammaparast N."/>
            <person name="Miyake T."/>
            <person name="Pemberton L.F."/>
            <person name="Li R."/>
        </authorList>
    </citation>
    <scope>SUBCELLULAR LOCATION</scope>
    <scope>MUTAGENESIS OF LYS-625</scope>
    <scope>INTERACTION WITH PSE1</scope>
</reference>
<reference key="20">
    <citation type="journal article" date="2005" name="FEBS Lett.">
        <title>In vitro selection of DNA binding sites for ABF1 protein from Saccharomyces cerevisiae.</title>
        <authorList>
            <person name="Beinoraviciute-Kellner R."/>
            <person name="Lipps G."/>
            <person name="Krauss G."/>
        </authorList>
    </citation>
    <scope>DNA-BINDING</scope>
</reference>
<reference key="21">
    <citation type="journal article" date="2006" name="Mol. Cell. Biol.">
        <title>Asymmetric positioning of nucleosomes and directional establishment of transcriptionally silent chromatin by Saccharomyces cerevisiae silencers.</title>
        <authorList>
            <person name="Zou Y."/>
            <person name="Yu Q."/>
            <person name="Bi X."/>
        </authorList>
    </citation>
    <scope>DNA-BINDING</scope>
    <scope>FUNCTION</scope>
</reference>
<reference key="22">
    <citation type="journal article" date="2007" name="J. Proteome Res.">
        <title>Large-scale phosphorylation analysis of alpha-factor-arrested Saccharomyces cerevisiae.</title>
        <authorList>
            <person name="Li X."/>
            <person name="Gerber S.A."/>
            <person name="Rudner A.D."/>
            <person name="Beausoleil S.A."/>
            <person name="Haas W."/>
            <person name="Villen J."/>
            <person name="Elias J.E."/>
            <person name="Gygi S.P."/>
        </authorList>
    </citation>
    <scope>PHOSPHORYLATION [LARGE SCALE ANALYSIS] AT SER-467 AND SER-720</scope>
    <scope>IDENTIFICATION BY MASS SPECTROMETRY [LARGE SCALE ANALYSIS]</scope>
    <source>
        <strain>ADR376</strain>
    </source>
</reference>
<reference key="23">
    <citation type="journal article" date="2007" name="Nucleic Acids Res.">
        <title>Genome-wide analysis of transcriptional dependence and probable target sites for Abf1 and Rap1 in Saccharomyces cerevisiae.</title>
        <authorList>
            <person name="Yarragudi A."/>
            <person name="Parfrey L.W."/>
            <person name="Morse R.H."/>
        </authorList>
    </citation>
    <scope>DNA-BINDING</scope>
    <scope>FUNCTION</scope>
</reference>
<reference key="24">
    <citation type="journal article" date="2008" name="Electrophoresis">
        <title>Rapid chip-based capillary electrophoretic mobility shift assay with negative pressure injection for the binding study of transcription factor Abf1 in Saccharomyces cerevisiae.</title>
        <authorList>
            <person name="Yang Q."/>
            <person name="Zhao Y.C."/>
            <person name="Xiong Q."/>
            <person name="Cheng J."/>
        </authorList>
    </citation>
    <scope>DNA-BINDING</scope>
</reference>
<reference key="25">
    <citation type="journal article" date="2008" name="Mol. Biol. Cell">
        <title>Genome-wide expression profiling, in vivo DNA binding analysis, and probabilistic motif prediction reveal novel Abf1 target genes during fermentation, respiration, and sporulation in yeast.</title>
        <authorList>
            <person name="Schlecht U."/>
            <person name="Erb I."/>
            <person name="Demougin P."/>
            <person name="Robine N."/>
            <person name="Borde V."/>
            <person name="van Nimwegen E."/>
            <person name="Nicolas A."/>
            <person name="Primig M."/>
        </authorList>
    </citation>
    <scope>DNA-BINDING</scope>
    <scope>FUNCTION</scope>
</reference>
<reference key="26">
    <citation type="journal article" date="2008" name="Mol. Cell. Proteomics">
        <title>A multidimensional chromatography technology for in-depth phosphoproteome analysis.</title>
        <authorList>
            <person name="Albuquerque C.P."/>
            <person name="Smolka M.B."/>
            <person name="Payne S.H."/>
            <person name="Bafna V."/>
            <person name="Eng J."/>
            <person name="Zhou H."/>
        </authorList>
    </citation>
    <scope>PHOSPHORYLATION [LARGE SCALE ANALYSIS] AT THR-189; SER-193; SER-554; SER-618 AND SER-720</scope>
    <scope>IDENTIFICATION BY MASS SPECTROMETRY [LARGE SCALE ANALYSIS]</scope>
</reference>
<reference key="27">
    <citation type="journal article" date="2009" name="J. Biol. Chem.">
        <title>ABF1-binding sites promote efficient global genome nucleotide excision repair.</title>
        <authorList>
            <person name="Yu S."/>
            <person name="Smirnova J.B."/>
            <person name="Friedberg E.C."/>
            <person name="Stillman B."/>
            <person name="Akiyama M."/>
            <person name="Owen-Hughes T."/>
            <person name="Waters R."/>
            <person name="Reed S.H."/>
        </authorList>
    </citation>
    <scope>FUNCTION</scope>
</reference>
<reference key="28">
    <citation type="journal article" date="2009" name="Science">
        <title>Global analysis of Cdk1 substrate phosphorylation sites provides insights into evolution.</title>
        <authorList>
            <person name="Holt L.J."/>
            <person name="Tuch B.B."/>
            <person name="Villen J."/>
            <person name="Johnson A.D."/>
            <person name="Gygi S.P."/>
            <person name="Morgan D.O."/>
        </authorList>
    </citation>
    <scope>PHOSPHORYLATION [LARGE SCALE ANALYSIS] AT SER-720</scope>
    <scope>IDENTIFICATION BY MASS SPECTROMETRY [LARGE SCALE ANALYSIS]</scope>
</reference>
<reference key="29">
    <citation type="journal article" date="2010" name="PLoS Comput. Biol.">
        <title>Blurring of high-resolution data shows that the effect of intrinsic nucleosome occupancy on transcription factor binding is mostly regional, not local.</title>
        <authorList>
            <person name="Goh W.S."/>
            <person name="Orlov Y."/>
            <person name="Li J."/>
            <person name="Clarke N.D."/>
        </authorList>
    </citation>
    <scope>DNA-BINDING</scope>
</reference>
<reference key="30">
    <citation type="journal article" date="2011" name="Nucleic Acids Res.">
        <title>Extensive role of the general regulatory factors, Abf1 and Rap1, in determining genome-wide chromatin structure in budding yeast.</title>
        <authorList>
            <person name="Ganapathi M."/>
            <person name="Palumbo M.J."/>
            <person name="Ansari S.A."/>
            <person name="He Q."/>
            <person name="Tsui K."/>
            <person name="Nislow C."/>
            <person name="Morse R.H."/>
        </authorList>
    </citation>
    <scope>FUNCTION</scope>
</reference>
<reference key="31">
    <citation type="journal article" date="2012" name="Proteomics">
        <title>Sites of ubiquitin attachment in Saccharomyces cerevisiae.</title>
        <authorList>
            <person name="Starita L.M."/>
            <person name="Lo R.S."/>
            <person name="Eng J.K."/>
            <person name="von Haller P.D."/>
            <person name="Fields S."/>
        </authorList>
    </citation>
    <scope>UBIQUITINATION [LARGE SCALE ANALYSIS] AT LYS-18</scope>
    <scope>IDENTIFICATION BY MASS SPECTROMETRY [LARGE SCALE ANALYSIS]</scope>
</reference>
<evidence type="ECO:0000255" key="1"/>
<evidence type="ECO:0000256" key="2">
    <source>
        <dbReference type="SAM" id="MobiDB-lite"/>
    </source>
</evidence>
<evidence type="ECO:0000269" key="3">
    <source>
    </source>
</evidence>
<evidence type="ECO:0000269" key="4">
    <source>
    </source>
</evidence>
<evidence type="ECO:0000269" key="5">
    <source>
    </source>
</evidence>
<evidence type="ECO:0000269" key="6">
    <source>
    </source>
</evidence>
<evidence type="ECO:0000269" key="7">
    <source>
    </source>
</evidence>
<evidence type="ECO:0000269" key="8">
    <source>
    </source>
</evidence>
<evidence type="ECO:0000269" key="9">
    <source>
    </source>
</evidence>
<evidence type="ECO:0000269" key="10">
    <source>
    </source>
</evidence>
<evidence type="ECO:0000269" key="11">
    <source>
    </source>
</evidence>
<evidence type="ECO:0000269" key="12">
    <source>
    </source>
</evidence>
<evidence type="ECO:0000269" key="13">
    <source>
    </source>
</evidence>
<evidence type="ECO:0000269" key="14">
    <source>
    </source>
</evidence>
<evidence type="ECO:0000269" key="15">
    <source>
    </source>
</evidence>
<evidence type="ECO:0000269" key="16">
    <source>
    </source>
</evidence>
<evidence type="ECO:0000269" key="17">
    <source>
    </source>
</evidence>
<evidence type="ECO:0000269" key="18">
    <source>
    </source>
</evidence>
<evidence type="ECO:0000269" key="19">
    <source>
    </source>
</evidence>
<evidence type="ECO:0000305" key="20"/>
<evidence type="ECO:0007744" key="21">
    <source>
    </source>
</evidence>
<evidence type="ECO:0007744" key="22">
    <source>
    </source>
</evidence>
<evidence type="ECO:0007744" key="23">
    <source>
    </source>
</evidence>
<evidence type="ECO:0007744" key="24">
    <source>
    </source>
</evidence>
<proteinExistence type="evidence at protein level"/>
<organism>
    <name type="scientific">Saccharomyces cerevisiae (strain ATCC 204508 / S288c)</name>
    <name type="common">Baker's yeast</name>
    <dbReference type="NCBI Taxonomy" id="559292"/>
    <lineage>
        <taxon>Eukaryota</taxon>
        <taxon>Fungi</taxon>
        <taxon>Dikarya</taxon>
        <taxon>Ascomycota</taxon>
        <taxon>Saccharomycotina</taxon>
        <taxon>Saccharomycetes</taxon>
        <taxon>Saccharomycetales</taxon>
        <taxon>Saccharomycetaceae</taxon>
        <taxon>Saccharomyces</taxon>
    </lineage>
</organism>
<keyword id="KW-0010">Activator</keyword>
<keyword id="KW-0903">Direct protein sequencing</keyword>
<keyword id="KW-0227">DNA damage</keyword>
<keyword id="KW-0234">DNA repair</keyword>
<keyword id="KW-0235">DNA replication</keyword>
<keyword id="KW-0238">DNA-binding</keyword>
<keyword id="KW-1017">Isopeptide bond</keyword>
<keyword id="KW-0539">Nucleus</keyword>
<keyword id="KW-0597">Phosphoprotein</keyword>
<keyword id="KW-1185">Reference proteome</keyword>
<keyword id="KW-0804">Transcription</keyword>
<keyword id="KW-0805">Transcription regulation</keyword>
<keyword id="KW-0832">Ubl conjugation</keyword>
<comment type="function">
    <text evidence="3 4 5 6 7 9 10 12 13 14 15 17">General regulatory factor (GRF) that contributes to transcriptional activation of a large number of genes, as well as to DNA replication, silencing and telomere structure. Involved in the transcription activation of a subset of ribosomal protein genes. Binds the ARS-elements found in many promoters. Binds to the sequence 5'-TCN(7)ACG-3'. Influences on genome-wide nucleosome occupancy and affects chromatin structure, and probably dynamics. As a component of the global genome repair (GGR) complex, promotes global genome nucleotide excision repair (GG-NER) which removes DNA damage from nontranscribing DNA. Component of the regulatory network controlling mitotic and meiotic cell cycle progression.</text>
</comment>
<comment type="subunit">
    <text evidence="3 11">Component of the global genome repair (GGR) complex composed of at least ABF1, RAD7 and RAD16. Interacts with PSE1.</text>
</comment>
<comment type="subcellular location">
    <subcellularLocation>
        <location evidence="11">Nucleus</location>
    </subcellularLocation>
</comment>
<comment type="domain">
    <text evidence="6">Contains 2 important clusters of amino acid residues in the C terminus (C-terminal sequence 1 or CS1, residues 624 to 628; and CS2, residues 639 to 662). CS1 specifically participates in transcriptional silencing and/or repression in a context-dependent manner, whereas CS2 is universally required for all functions of ABF1.</text>
</comment>
<comment type="PTM">
    <text evidence="16 19">Extensively phosphorylated on Ser and Thr residues.</text>
</comment>
<comment type="miscellaneous">
    <text evidence="8">Present with 4820 molecules/cell in log phase SD medium.</text>
</comment>
<comment type="similarity">
    <text evidence="20">Belongs to the BAF1 family.</text>
</comment>
<protein>
    <recommendedName>
        <fullName>ARS-binding factor 1</fullName>
    </recommendedName>
    <alternativeName>
        <fullName>Bidirectionally acting factor 1</fullName>
    </alternativeName>
    <alternativeName>
        <fullName>DNA replication enhancer-binding protein OBF1</fullName>
    </alternativeName>
    <alternativeName>
        <fullName>SFB-B</fullName>
    </alternativeName>
</protein>
<name>ABF1_YEAST</name>
<feature type="chain" id="PRO_0000064807" description="ARS-binding factor 1">
    <location>
        <begin position="1"/>
        <end position="731"/>
    </location>
</feature>
<feature type="region of interest" description="Disordered" evidence="2">
    <location>
        <begin position="84"/>
        <end position="132"/>
    </location>
</feature>
<feature type="region of interest" description="Disordered" evidence="2">
    <location>
        <begin position="146"/>
        <end position="227"/>
    </location>
</feature>
<feature type="region of interest" description="Disordered" evidence="2">
    <location>
        <begin position="251"/>
        <end position="308"/>
    </location>
</feature>
<feature type="region of interest" description="Disordered" evidence="2">
    <location>
        <begin position="439"/>
        <end position="463"/>
    </location>
</feature>
<feature type="region of interest" description="Disordered" evidence="2">
    <location>
        <begin position="475"/>
        <end position="539"/>
    </location>
</feature>
<feature type="region of interest" description="Disordered" evidence="2">
    <location>
        <begin position="590"/>
        <end position="643"/>
    </location>
</feature>
<feature type="region of interest" description="C-terminal sequence 1">
    <location>
        <begin position="624"/>
        <end position="628"/>
    </location>
</feature>
<feature type="region of interest" description="C-terminal sequence 2">
    <location>
        <begin position="639"/>
        <end position="662"/>
    </location>
</feature>
<feature type="region of interest" description="Disordered" evidence="2">
    <location>
        <begin position="687"/>
        <end position="731"/>
    </location>
</feature>
<feature type="compositionally biased region" description="Low complexity" evidence="2">
    <location>
        <begin position="84"/>
        <end position="99"/>
    </location>
</feature>
<feature type="compositionally biased region" description="Low complexity" evidence="2">
    <location>
        <begin position="111"/>
        <end position="129"/>
    </location>
</feature>
<feature type="compositionally biased region" description="Basic and acidic residues" evidence="2">
    <location>
        <begin position="149"/>
        <end position="161"/>
    </location>
</feature>
<feature type="compositionally biased region" description="Polar residues" evidence="2">
    <location>
        <begin position="177"/>
        <end position="186"/>
    </location>
</feature>
<feature type="compositionally biased region" description="Low complexity" evidence="2">
    <location>
        <begin position="270"/>
        <end position="308"/>
    </location>
</feature>
<feature type="compositionally biased region" description="Low complexity" evidence="2">
    <location>
        <begin position="445"/>
        <end position="454"/>
    </location>
</feature>
<feature type="compositionally biased region" description="Low complexity" evidence="2">
    <location>
        <begin position="481"/>
        <end position="510"/>
    </location>
</feature>
<feature type="compositionally biased region" description="Basic and acidic residues" evidence="2">
    <location>
        <begin position="634"/>
        <end position="643"/>
    </location>
</feature>
<feature type="compositionally biased region" description="Basic residues" evidence="2">
    <location>
        <begin position="689"/>
        <end position="698"/>
    </location>
</feature>
<feature type="modified residue" description="Phosphothreonine" evidence="22">
    <location>
        <position position="189"/>
    </location>
</feature>
<feature type="modified residue" description="Phosphoserine" evidence="22">
    <location>
        <position position="193"/>
    </location>
</feature>
<feature type="modified residue" description="Phosphoserine" evidence="21">
    <location>
        <position position="467"/>
    </location>
</feature>
<feature type="modified residue" description="Phosphoserine" evidence="22">
    <location>
        <position position="554"/>
    </location>
</feature>
<feature type="modified residue" description="Phosphoserine" evidence="22">
    <location>
        <position position="618"/>
    </location>
</feature>
<feature type="modified residue" description="Phosphoserine; by PKC" evidence="1">
    <location>
        <position position="624"/>
    </location>
</feature>
<feature type="modified residue" description="Phosphoserine; by CK2" evidence="19 21 22 23">
    <location>
        <position position="720"/>
    </location>
</feature>
<feature type="cross-link" description="Glycyl lysine isopeptide (Lys-Gly) (interchain with G-Cter in ubiquitin)" evidence="24">
    <location>
        <position position="18"/>
    </location>
</feature>
<feature type="mutagenesis site" description="Loss of DNA binding." evidence="18">
    <original>H</original>
    <variation>Q</variation>
    <location>
        <position position="57"/>
    </location>
</feature>
<feature type="mutagenesis site" description="Loss of DNA binding." evidence="18">
    <original>C</original>
    <variation>S</variation>
    <location>
        <position position="71"/>
    </location>
</feature>
<feature type="mutagenesis site" description="Leads to mislocalization into the cytoplasm." evidence="11">
    <original>K</original>
    <variation>I</variation>
    <location>
        <position position="625"/>
    </location>
</feature>
<feature type="mutagenesis site" description="Strongly reduces phosphorylation by CK2." evidence="19">
    <original>S</original>
    <variation>A</variation>
    <location>
        <position position="720"/>
    </location>
</feature>
<feature type="sequence conflict" description="In Ref. 1; CAA34421." evidence="20" ref="1">
    <original>N</original>
    <variation>K</variation>
    <location>
        <position position="125"/>
    </location>
</feature>
<feature type="sequence conflict" description="In Ref. 2; CAA35966, 3; AAA66311 and 4; AAA34823." evidence="20" ref="2 3 4">
    <original>V</original>
    <variation>A</variation>
    <location>
        <position position="128"/>
    </location>
</feature>
<feature type="sequence conflict" description="In Ref. 2; CAA35966, 3; AAA66311 and 4; AAA34823." evidence="20" ref="2 3 4">
    <original>T</original>
    <variation>I</variation>
    <location>
        <position position="148"/>
    </location>
</feature>
<feature type="sequence conflict" description="In Ref. 2; CAA35966, 3; AAA66311 and 4; AAA34823." evidence="20" ref="2 3 4">
    <original>NT</original>
    <variation>TN</variation>
    <location>
        <begin position="279"/>
        <end position="280"/>
    </location>
</feature>
<feature type="sequence conflict" description="In Ref. 2; CAA35966, 3; AAA66311 and 4; AAA34823." evidence="20" ref="2 3 4">
    <original>T</original>
    <variation>N</variation>
    <location>
        <position position="690"/>
    </location>
</feature>